<sequence>MCRRPDCGFSFSPGPVILLWCCLLLPIVSSAAVSVAPTAAEKVPAECPELTRRCLLGEVFQGDKYESWLRPLVNVTGRDGPLSQLIRYRPVTPEAANSVLLDEAFLDTLALLYNNPDQLRALLTLLSSDTAPRWMTVMRGYSECGDGSPAVYTCVDDLCRGYDLTRLSYGRSIFTEHVLGFELVPPSLFNVVVAIRNEATRTNRAVRLPVSTAAAPEGITLFYGLYNAVKEFCLRHQLDPPLLRHLDKYYAGLPPELKQTRVNLPAHSRYGPQAVDAR</sequence>
<feature type="signal peptide" evidence="2">
    <location>
        <begin position="1"/>
        <end position="30"/>
    </location>
</feature>
<feature type="chain" id="PRO_0000038284" description="Envelope glycoprotein L" evidence="2">
    <location>
        <begin position="31"/>
        <end position="278"/>
    </location>
</feature>
<feature type="domain" description="gL betaherpesvirus-type" evidence="3">
    <location>
        <begin position="43"/>
        <end position="256"/>
    </location>
</feature>
<feature type="disulfide bond" description="Interchain" evidence="3">
    <location>
        <position position="47"/>
    </location>
</feature>
<feature type="disulfide bond" description="Interchain" evidence="3">
    <location>
        <position position="54"/>
    </location>
</feature>
<feature type="disulfide bond" description="Interchain" evidence="3">
    <location>
        <position position="144"/>
    </location>
</feature>
<feature type="disulfide bond" evidence="3">
    <location>
        <begin position="154"/>
        <end position="159"/>
    </location>
</feature>
<accession>Q68671</accession>
<comment type="function">
    <text evidence="1 2">The heterodimer glycoprotein H-glycoprotein L is required for the fusion of viral and plasma membranes leading to virus entry into the host cell. Acts as a functional inhibitor of gH and maintains gH in an inhibited form. Upon binding to host integrins, gL dissociates from gH leading to activation of the viral fusion glycoproteins gB and gH (By similarity). In human cytomegalovirus, forms two distincts complexes to mediate viral entry, a trimer and a pentamer at the surface of the virion envelope. The gH-gL-gO trimer is required for infection in fibroblasts by interacting with host PDGFRA, and in glioblastoma cells by interacting with host EPHA2. The gH-gL-UL128-UL130-UL131A pentamer is essential for viral entry in epithelial, endothelial and myeloid cells via interaction with host NRP2 (By similarity).</text>
</comment>
<comment type="subunit">
    <text evidence="1 2">Interacts with glycoprotein H (gH); this interaction is necessary for the correct processing and cell surface expression of gH (By similarity). Forms the envelope pentamer complex (PC) composed of gH, gL, UL128, UL130, and UL131A. The pentamer interacts with host NRP2. Forms the envelope trimer complex composed of gH, gL, and gO. The trimer interacts with host PDGFRA (By similarity). The trimer also interacts with host EPHA2 (By similarity).</text>
</comment>
<comment type="subcellular location">
    <subcellularLocation>
        <location evidence="2">Virion membrane</location>
        <topology evidence="2">Peripheral membrane protein</topology>
        <orientation evidence="2">Extracellular side</orientation>
    </subcellularLocation>
    <subcellularLocation>
        <location evidence="2">Host cell membrane</location>
        <topology evidence="2">Peripheral membrane protein</topology>
        <orientation evidence="2">Extracellular side</orientation>
    </subcellularLocation>
    <subcellularLocation>
        <location evidence="2">Host Golgi apparatus</location>
        <location evidence="2">Host trans-Golgi network</location>
    </subcellularLocation>
    <text evidence="2">gL associates with the extravirion surface through its binding to gH. During virion morphogenesis, this protein probably accumulates in the host trans-Golgi where secondary envelopment occurs.</text>
</comment>
<comment type="similarity">
    <text evidence="3">Belongs to the herpesviridae glycoprotein L (gL) family. Betaherpesvirinae gL subfamily.</text>
</comment>
<organism>
    <name type="scientific">Human cytomegalovirus (strain 5035)</name>
    <name type="common">HHV-5</name>
    <name type="synonym">Human herpesvirus 5</name>
    <dbReference type="NCBI Taxonomy" id="69166"/>
    <lineage>
        <taxon>Viruses</taxon>
        <taxon>Duplodnaviria</taxon>
        <taxon>Heunggongvirae</taxon>
        <taxon>Peploviricota</taxon>
        <taxon>Herviviricetes</taxon>
        <taxon>Herpesvirales</taxon>
        <taxon>Orthoherpesviridae</taxon>
        <taxon>Betaherpesvirinae</taxon>
        <taxon>Cytomegalovirus</taxon>
        <taxon>Cytomegalovirus humanbeta5</taxon>
        <taxon>Human cytomegalovirus</taxon>
    </lineage>
</organism>
<keyword id="KW-1015">Disulfide bond</keyword>
<keyword id="KW-1169">Fusion of virus membrane with host cell membrane</keyword>
<keyword id="KW-1168">Fusion of virus membrane with host membrane</keyword>
<keyword id="KW-0325">Glycoprotein</keyword>
<keyword id="KW-1032">Host cell membrane</keyword>
<keyword id="KW-1040">Host Golgi apparatus</keyword>
<keyword id="KW-1043">Host membrane</keyword>
<keyword id="KW-0945">Host-virus interaction</keyword>
<keyword id="KW-0472">Membrane</keyword>
<keyword id="KW-0732">Signal</keyword>
<keyword id="KW-1161">Viral attachment to host cell</keyword>
<keyword id="KW-1234">Viral attachment to host entry receptor</keyword>
<keyword id="KW-0261">Viral envelope protein</keyword>
<keyword id="KW-1162">Viral penetration into host cytoplasm</keyword>
<keyword id="KW-0946">Virion</keyword>
<keyword id="KW-1160">Virus entry into host cell</keyword>
<reference key="1">
    <citation type="submission" date="1996-04" db="EMBL/GenBank/DDBJ databases">
        <authorList>
            <person name="Milne R.S.B."/>
            <person name="Mathers K.E."/>
            <person name="Booth J.C."/>
        </authorList>
    </citation>
    <scope>NUCLEOTIDE SEQUENCE [GENOMIC DNA]</scope>
</reference>
<gene>
    <name evidence="2" type="primary">gL</name>
    <name type="synonym">UL115</name>
</gene>
<proteinExistence type="inferred from homology"/>
<name>GL_HCMV5</name>
<dbReference type="EMBL" id="U56916">
    <property type="protein sequence ID" value="AAA99167.1"/>
    <property type="molecule type" value="Genomic_DNA"/>
</dbReference>
<dbReference type="SMR" id="Q68671"/>
<dbReference type="GO" id="GO:0044177">
    <property type="term" value="C:host cell Golgi apparatus"/>
    <property type="evidence" value="ECO:0007669"/>
    <property type="project" value="UniProtKB-SubCell"/>
</dbReference>
<dbReference type="GO" id="GO:0020002">
    <property type="term" value="C:host cell plasma membrane"/>
    <property type="evidence" value="ECO:0007669"/>
    <property type="project" value="UniProtKB-SubCell"/>
</dbReference>
<dbReference type="GO" id="GO:0016020">
    <property type="term" value="C:membrane"/>
    <property type="evidence" value="ECO:0007669"/>
    <property type="project" value="UniProtKB-KW"/>
</dbReference>
<dbReference type="GO" id="GO:0019031">
    <property type="term" value="C:viral envelope"/>
    <property type="evidence" value="ECO:0007669"/>
    <property type="project" value="UniProtKB-UniRule"/>
</dbReference>
<dbReference type="GO" id="GO:0055036">
    <property type="term" value="C:virion membrane"/>
    <property type="evidence" value="ECO:0007669"/>
    <property type="project" value="UniProtKB-SubCell"/>
</dbReference>
<dbReference type="GO" id="GO:0098670">
    <property type="term" value="P:entry receptor-mediated virion attachment to host cell"/>
    <property type="evidence" value="ECO:0007669"/>
    <property type="project" value="UniProtKB-KW"/>
</dbReference>
<dbReference type="GO" id="GO:0019064">
    <property type="term" value="P:fusion of virus membrane with host plasma membrane"/>
    <property type="evidence" value="ECO:0007669"/>
    <property type="project" value="UniProtKB-UniRule"/>
</dbReference>
<dbReference type="GO" id="GO:0046718">
    <property type="term" value="P:symbiont entry into host cell"/>
    <property type="evidence" value="ECO:0007669"/>
    <property type="project" value="UniProtKB-KW"/>
</dbReference>
<dbReference type="HAMAP" id="MF_04036">
    <property type="entry name" value="HSV_GL_betahv"/>
    <property type="match status" value="1"/>
</dbReference>
<dbReference type="InterPro" id="IPR002689">
    <property type="entry name" value="Cytomegalo_gL"/>
</dbReference>
<dbReference type="Pfam" id="PF01801">
    <property type="entry name" value="Cytomega_gL"/>
    <property type="match status" value="1"/>
</dbReference>
<dbReference type="PROSITE" id="PS52025">
    <property type="entry name" value="GL_BHV"/>
    <property type="match status" value="1"/>
</dbReference>
<organismHost>
    <name type="scientific">Homo sapiens</name>
    <name type="common">Human</name>
    <dbReference type="NCBI Taxonomy" id="9606"/>
</organismHost>
<protein>
    <recommendedName>
        <fullName evidence="2">Envelope glycoprotein L</fullName>
        <shortName evidence="2">gL</shortName>
    </recommendedName>
</protein>
<evidence type="ECO:0000250" key="1">
    <source>
        <dbReference type="UniProtKB" id="F5HCH8"/>
    </source>
</evidence>
<evidence type="ECO:0000255" key="2">
    <source>
        <dbReference type="HAMAP-Rule" id="MF_04036"/>
    </source>
</evidence>
<evidence type="ECO:0000255" key="3">
    <source>
        <dbReference type="PROSITE-ProRule" id="PRU01369"/>
    </source>
</evidence>